<sequence>MMLMMLPFIGSVSVSESLVAMTTVCLVYLILKFFQTEIPEGLRRLPGPKPLPIIGNVLEMGSRPYLSLTAMSKRYGNVFQIQIGMRPVVVLSGSETVRQALIKQGDDFAGRPDLYSFRFINEGKSLAFSTDKAGIWRARRKLAYSALRSFATLEGTTPEYSCVLEEHVCKEGEYLIKQLNTAMTADGSFDPFRHIVVSVANVICGMCFGRRYDHDDQELVGLVTLSDEFGRVVGSGNPADFIPILQYLPSATMKNFLRINGRFTEFVQKIVTEHYTTFDKDNIRDITDSLIDHCEDRKLDENSNVQMSDEKIVGIVNDLFGAGFDTVSTALSWSVMYLVAHPEIQERLYQEIEDKVGLDRMPLLSDKPNLPFLEAFILEILRHSSFLPFTIPHCTTKDTSLNGYFIPKDTCVFINQWQINHDPEMWKDPSSFNPDRFLSADGSEVNKLDGEKVMAFGMGKRRCIGEVIARNEVYLFLAILIQKLHFLPIPGEKLDMTPEYGLTMKHKRCHLKATMRARNEH</sequence>
<accession>O42430</accession>
<organism>
    <name type="scientific">Limanda limanda</name>
    <name type="common">Common dab</name>
    <name type="synonym">Pleuronectes limanda</name>
    <dbReference type="NCBI Taxonomy" id="27771"/>
    <lineage>
        <taxon>Eukaryota</taxon>
        <taxon>Metazoa</taxon>
        <taxon>Chordata</taxon>
        <taxon>Craniata</taxon>
        <taxon>Vertebrata</taxon>
        <taxon>Euteleostomi</taxon>
        <taxon>Actinopterygii</taxon>
        <taxon>Neopterygii</taxon>
        <taxon>Teleostei</taxon>
        <taxon>Neoteleostei</taxon>
        <taxon>Acanthomorphata</taxon>
        <taxon>Carangaria</taxon>
        <taxon>Pleuronectiformes</taxon>
        <taxon>Pleuronectoidei</taxon>
        <taxon>Pleuronectidae</taxon>
        <taxon>Limanda</taxon>
    </lineage>
</organism>
<keyword id="KW-0256">Endoplasmic reticulum</keyword>
<keyword id="KW-0349">Heme</keyword>
<keyword id="KW-0408">Iron</keyword>
<keyword id="KW-0472">Membrane</keyword>
<keyword id="KW-0479">Metal-binding</keyword>
<keyword id="KW-0492">Microsome</keyword>
<keyword id="KW-0503">Monooxygenase</keyword>
<keyword id="KW-0560">Oxidoreductase</keyword>
<dbReference type="EC" id="1.14.14.1"/>
<dbReference type="EMBL" id="AJ001724">
    <property type="protein sequence ID" value="CAA04953.1"/>
    <property type="molecule type" value="mRNA"/>
</dbReference>
<dbReference type="SMR" id="O42430"/>
<dbReference type="GO" id="GO:0005789">
    <property type="term" value="C:endoplasmic reticulum membrane"/>
    <property type="evidence" value="ECO:0007669"/>
    <property type="project" value="UniProtKB-SubCell"/>
</dbReference>
<dbReference type="GO" id="GO:0020037">
    <property type="term" value="F:heme binding"/>
    <property type="evidence" value="ECO:0007669"/>
    <property type="project" value="InterPro"/>
</dbReference>
<dbReference type="GO" id="GO:0005506">
    <property type="term" value="F:iron ion binding"/>
    <property type="evidence" value="ECO:0007669"/>
    <property type="project" value="InterPro"/>
</dbReference>
<dbReference type="GO" id="GO:0004508">
    <property type="term" value="F:steroid 17-alpha-monooxygenase activity"/>
    <property type="evidence" value="ECO:0007669"/>
    <property type="project" value="TreeGrafter"/>
</dbReference>
<dbReference type="GO" id="GO:0042446">
    <property type="term" value="P:hormone biosynthetic process"/>
    <property type="evidence" value="ECO:0007669"/>
    <property type="project" value="TreeGrafter"/>
</dbReference>
<dbReference type="GO" id="GO:0042448">
    <property type="term" value="P:progesterone metabolic process"/>
    <property type="evidence" value="ECO:0007669"/>
    <property type="project" value="TreeGrafter"/>
</dbReference>
<dbReference type="CDD" id="cd20676">
    <property type="entry name" value="CYP1A"/>
    <property type="match status" value="1"/>
</dbReference>
<dbReference type="FunFam" id="1.10.630.10:FF:000002">
    <property type="entry name" value="Cytochrome P450 1A1"/>
    <property type="match status" value="1"/>
</dbReference>
<dbReference type="Gene3D" id="1.10.630.10">
    <property type="entry name" value="Cytochrome P450"/>
    <property type="match status" value="1"/>
</dbReference>
<dbReference type="InterPro" id="IPR001128">
    <property type="entry name" value="Cyt_P450"/>
</dbReference>
<dbReference type="InterPro" id="IPR017972">
    <property type="entry name" value="Cyt_P450_CS"/>
</dbReference>
<dbReference type="InterPro" id="IPR002401">
    <property type="entry name" value="Cyt_P450_E_grp-I"/>
</dbReference>
<dbReference type="InterPro" id="IPR008066">
    <property type="entry name" value="Cyt_P450_E_grp-I_CYP1"/>
</dbReference>
<dbReference type="InterPro" id="IPR036396">
    <property type="entry name" value="Cyt_P450_sf"/>
</dbReference>
<dbReference type="PANTHER" id="PTHR24289:SF21">
    <property type="entry name" value="CYTOCHROME P450 1A"/>
    <property type="match status" value="1"/>
</dbReference>
<dbReference type="PANTHER" id="PTHR24289">
    <property type="entry name" value="STEROID 17-ALPHA-HYDROXYLASE/17,20 LYASE"/>
    <property type="match status" value="1"/>
</dbReference>
<dbReference type="Pfam" id="PF00067">
    <property type="entry name" value="p450"/>
    <property type="match status" value="1"/>
</dbReference>
<dbReference type="PRINTS" id="PR00463">
    <property type="entry name" value="EP450I"/>
</dbReference>
<dbReference type="PRINTS" id="PR01683">
    <property type="entry name" value="EP450ICYP1A"/>
</dbReference>
<dbReference type="PRINTS" id="PR00385">
    <property type="entry name" value="P450"/>
</dbReference>
<dbReference type="SUPFAM" id="SSF48264">
    <property type="entry name" value="Cytochrome P450"/>
    <property type="match status" value="1"/>
</dbReference>
<dbReference type="PROSITE" id="PS00086">
    <property type="entry name" value="CYTOCHROME_P450"/>
    <property type="match status" value="1"/>
</dbReference>
<comment type="function">
    <text>Cytochromes P450 are a group of heme-thiolate monooxygenases. They oxidize a variety of structurally unrelated compounds, including steroids, fatty acids, and xenobiotics.</text>
</comment>
<comment type="catalytic activity">
    <reaction>
        <text>an organic molecule + reduced [NADPH--hemoprotein reductase] + O2 = an alcohol + oxidized [NADPH--hemoprotein reductase] + H2O + H(+)</text>
        <dbReference type="Rhea" id="RHEA:17149"/>
        <dbReference type="Rhea" id="RHEA-COMP:11964"/>
        <dbReference type="Rhea" id="RHEA-COMP:11965"/>
        <dbReference type="ChEBI" id="CHEBI:15377"/>
        <dbReference type="ChEBI" id="CHEBI:15378"/>
        <dbReference type="ChEBI" id="CHEBI:15379"/>
        <dbReference type="ChEBI" id="CHEBI:30879"/>
        <dbReference type="ChEBI" id="CHEBI:57618"/>
        <dbReference type="ChEBI" id="CHEBI:58210"/>
        <dbReference type="ChEBI" id="CHEBI:142491"/>
        <dbReference type="EC" id="1.14.14.1"/>
    </reaction>
</comment>
<comment type="cofactor">
    <cofactor evidence="1">
        <name>heme</name>
        <dbReference type="ChEBI" id="CHEBI:30413"/>
    </cofactor>
</comment>
<comment type="subcellular location">
    <subcellularLocation>
        <location>Endoplasmic reticulum membrane</location>
        <topology>Peripheral membrane protein</topology>
    </subcellularLocation>
    <subcellularLocation>
        <location>Microsome membrane</location>
        <topology>Peripheral membrane protein</topology>
    </subcellularLocation>
</comment>
<comment type="similarity">
    <text evidence="2">Belongs to the cytochrome P450 family.</text>
</comment>
<name>CP1A1_LIMLI</name>
<gene>
    <name type="primary">cyp1a1</name>
</gene>
<evidence type="ECO:0000250" key="1"/>
<evidence type="ECO:0000305" key="2"/>
<proteinExistence type="evidence at transcript level"/>
<feature type="chain" id="PRO_0000051637" description="Cytochrome P450 1A1">
    <location>
        <begin position="1"/>
        <end position="521"/>
    </location>
</feature>
<feature type="binding site" evidence="1">
    <location>
        <position position="229"/>
    </location>
    <ligand>
        <name>substrate</name>
    </ligand>
</feature>
<feature type="binding site" description="axial binding residue" evidence="1">
    <location>
        <position position="463"/>
    </location>
    <ligand>
        <name>heme</name>
        <dbReference type="ChEBI" id="CHEBI:30413"/>
    </ligand>
    <ligandPart>
        <name>Fe</name>
        <dbReference type="ChEBI" id="CHEBI:18248"/>
    </ligandPart>
</feature>
<reference key="1">
    <citation type="journal article" date="2001" name="Comp. Biochem. Physiol.">
        <title>Measurement of cytochrome P4501A induction in dab (Limanda limanda) and other teleosts with species-specific cDNA probes: isolation and characterisation of dab cDNA and its use in expression studies with beta-naphthoflavone-treated fish.</title>
        <authorList>
            <person name="Craft J.A."/>
            <person name="Robertson F.E."/>
            <person name="McPhail M.E."/>
            <person name="Brown E."/>
            <person name="Stagg R.M."/>
        </authorList>
    </citation>
    <scope>NUCLEOTIDE SEQUENCE [MRNA]</scope>
    <source>
        <tissue>Liver</tissue>
    </source>
</reference>
<protein>
    <recommendedName>
        <fullName>Cytochrome P450 1A1</fullName>
        <ecNumber>1.14.14.1</ecNumber>
    </recommendedName>
    <alternativeName>
        <fullName>CYPIA1</fullName>
    </alternativeName>
</protein>